<accession>Q9Z1M8</accession>
<accession>Q8R0P0</accession>
<accession>Q95H93</accession>
<dbReference type="EMBL" id="AJ006130">
    <property type="protein sequence ID" value="CAA06880.1"/>
    <property type="molecule type" value="mRNA"/>
</dbReference>
<dbReference type="EMBL" id="BC014739">
    <property type="protein sequence ID" value="AAH14739.1"/>
    <property type="molecule type" value="mRNA"/>
</dbReference>
<dbReference type="EMBL" id="BC026569">
    <property type="protein sequence ID" value="AAH26569.1"/>
    <property type="molecule type" value="mRNA"/>
</dbReference>
<dbReference type="EMBL" id="BC029671">
    <property type="protein sequence ID" value="AAH29671.1"/>
    <property type="molecule type" value="mRNA"/>
</dbReference>
<dbReference type="EMBL" id="BC029694">
    <property type="protein sequence ID" value="AAH29694.1"/>
    <property type="molecule type" value="mRNA"/>
</dbReference>
<dbReference type="EMBL" id="BC033356">
    <property type="protein sequence ID" value="AAH33356.1"/>
    <property type="molecule type" value="mRNA"/>
</dbReference>
<dbReference type="CCDS" id="CCDS57119.1"/>
<dbReference type="RefSeq" id="NP_036009.1">
    <property type="nucleotide sequence ID" value="NM_011879.2"/>
</dbReference>
<dbReference type="SMR" id="Q9Z1M8"/>
<dbReference type="BioGRID" id="204851">
    <property type="interactions" value="24"/>
</dbReference>
<dbReference type="FunCoup" id="Q9Z1M8">
    <property type="interactions" value="3901"/>
</dbReference>
<dbReference type="STRING" id="10090.ENSMUSP00000007042"/>
<dbReference type="GlyGen" id="Q9Z1M8">
    <property type="glycosylation" value="1 site"/>
</dbReference>
<dbReference type="iPTMnet" id="Q9Z1M8"/>
<dbReference type="PhosphoSitePlus" id="Q9Z1M8"/>
<dbReference type="SwissPalm" id="Q9Z1M8"/>
<dbReference type="jPOST" id="Q9Z1M8"/>
<dbReference type="PaxDb" id="10090-ENSMUSP00000007042"/>
<dbReference type="ProteomicsDB" id="254911"/>
<dbReference type="Pumba" id="Q9Z1M8"/>
<dbReference type="Antibodypedia" id="7468">
    <property type="antibodies" value="132 antibodies from 28 providers"/>
</dbReference>
<dbReference type="DNASU" id="24010"/>
<dbReference type="GeneID" id="24010"/>
<dbReference type="KEGG" id="mmu:24010"/>
<dbReference type="UCSC" id="uc033hgh.1">
    <property type="organism name" value="mouse"/>
</dbReference>
<dbReference type="AGR" id="MGI:1345142"/>
<dbReference type="CTD" id="3550"/>
<dbReference type="MGI" id="MGI:1345142">
    <property type="gene designation" value="Ik"/>
</dbReference>
<dbReference type="VEuPathDB" id="HostDB:ENSMUSG00000024474"/>
<dbReference type="eggNOG" id="KOG2498">
    <property type="taxonomic scope" value="Eukaryota"/>
</dbReference>
<dbReference type="HOGENOM" id="CLU_026814_2_0_1"/>
<dbReference type="InParanoid" id="Q9Z1M8"/>
<dbReference type="OMA" id="WQQTNGY"/>
<dbReference type="OrthoDB" id="77760at9989"/>
<dbReference type="PhylomeDB" id="Q9Z1M8"/>
<dbReference type="TreeFam" id="TF321907"/>
<dbReference type="Reactome" id="R-MMU-72163">
    <property type="pathway name" value="mRNA Splicing - Major Pathway"/>
</dbReference>
<dbReference type="BioGRID-ORCS" id="24010">
    <property type="hits" value="24 hits in 77 CRISPR screens"/>
</dbReference>
<dbReference type="ChiTaRS" id="Ik">
    <property type="organism name" value="mouse"/>
</dbReference>
<dbReference type="PRO" id="PR:Q9Z1M8"/>
<dbReference type="Proteomes" id="UP000000589">
    <property type="component" value="Chromosome 18"/>
</dbReference>
<dbReference type="RNAct" id="Q9Z1M8">
    <property type="molecule type" value="protein"/>
</dbReference>
<dbReference type="Bgee" id="ENSMUSG00000024474">
    <property type="expression patterns" value="Expressed in optic fissure and 264 other cell types or tissues"/>
</dbReference>
<dbReference type="ExpressionAtlas" id="Q9Z1M8">
    <property type="expression patterns" value="baseline and differential"/>
</dbReference>
<dbReference type="GO" id="GO:0005694">
    <property type="term" value="C:chromosome"/>
    <property type="evidence" value="ECO:0007669"/>
    <property type="project" value="UniProtKB-SubCell"/>
</dbReference>
<dbReference type="GO" id="GO:0005737">
    <property type="term" value="C:cytoplasm"/>
    <property type="evidence" value="ECO:0007669"/>
    <property type="project" value="UniProtKB-KW"/>
</dbReference>
<dbReference type="GO" id="GO:0005654">
    <property type="term" value="C:nucleoplasm"/>
    <property type="evidence" value="ECO:0000250"/>
    <property type="project" value="UniProtKB"/>
</dbReference>
<dbReference type="GO" id="GO:0005634">
    <property type="term" value="C:nucleus"/>
    <property type="evidence" value="ECO:0000250"/>
    <property type="project" value="UniProtKB"/>
</dbReference>
<dbReference type="GO" id="GO:0000922">
    <property type="term" value="C:spindle pole"/>
    <property type="evidence" value="ECO:0007669"/>
    <property type="project" value="UniProtKB-SubCell"/>
</dbReference>
<dbReference type="GO" id="GO:0071005">
    <property type="term" value="C:U2-type precatalytic spliceosome"/>
    <property type="evidence" value="ECO:0000250"/>
    <property type="project" value="UniProtKB"/>
</dbReference>
<dbReference type="GO" id="GO:0000278">
    <property type="term" value="P:mitotic cell cycle"/>
    <property type="evidence" value="ECO:0000250"/>
    <property type="project" value="UniProtKB"/>
</dbReference>
<dbReference type="GO" id="GO:0007094">
    <property type="term" value="P:mitotic spindle assembly checkpoint signaling"/>
    <property type="evidence" value="ECO:0000250"/>
    <property type="project" value="UniProtKB"/>
</dbReference>
<dbReference type="GO" id="GO:0000398">
    <property type="term" value="P:mRNA splicing, via spliceosome"/>
    <property type="evidence" value="ECO:0000250"/>
    <property type="project" value="UniProtKB"/>
</dbReference>
<dbReference type="GO" id="GO:0034501">
    <property type="term" value="P:protein localization to kinetochore"/>
    <property type="evidence" value="ECO:0000250"/>
    <property type="project" value="UniProtKB"/>
</dbReference>
<dbReference type="InterPro" id="IPR039896">
    <property type="entry name" value="Red-like"/>
</dbReference>
<dbReference type="InterPro" id="IPR012492">
    <property type="entry name" value="RED_C"/>
</dbReference>
<dbReference type="InterPro" id="IPR012916">
    <property type="entry name" value="RED_N"/>
</dbReference>
<dbReference type="PANTHER" id="PTHR12765">
    <property type="entry name" value="RED PROTEIN IK FACTOR CYTOKINE IK"/>
    <property type="match status" value="1"/>
</dbReference>
<dbReference type="Pfam" id="PF07807">
    <property type="entry name" value="RED_C"/>
    <property type="match status" value="1"/>
</dbReference>
<dbReference type="Pfam" id="PF07808">
    <property type="entry name" value="RED_N"/>
    <property type="match status" value="1"/>
</dbReference>
<organism>
    <name type="scientific">Mus musculus</name>
    <name type="common">Mouse</name>
    <dbReference type="NCBI Taxonomy" id="10090"/>
    <lineage>
        <taxon>Eukaryota</taxon>
        <taxon>Metazoa</taxon>
        <taxon>Chordata</taxon>
        <taxon>Craniata</taxon>
        <taxon>Vertebrata</taxon>
        <taxon>Euteleostomi</taxon>
        <taxon>Mammalia</taxon>
        <taxon>Eutheria</taxon>
        <taxon>Euarchontoglires</taxon>
        <taxon>Glires</taxon>
        <taxon>Rodentia</taxon>
        <taxon>Myomorpha</taxon>
        <taxon>Muroidea</taxon>
        <taxon>Muridae</taxon>
        <taxon>Murinae</taxon>
        <taxon>Mus</taxon>
        <taxon>Mus</taxon>
    </lineage>
</organism>
<reference key="1">
    <citation type="journal article" date="1999" name="Gene">
        <title>Isolation, sequencing and expression of RED, a novel human gene encoding an acidic-basic dipeptide repeat.</title>
        <authorList>
            <person name="Assier E."/>
            <person name="Bouzinba-Segard H."/>
            <person name="Stolzenberg M.-C."/>
            <person name="Stephens R."/>
            <person name="Bardos J."/>
            <person name="Freemont P."/>
            <person name="Charron D."/>
            <person name="Trowsdale J."/>
            <person name="Rich T."/>
        </authorList>
    </citation>
    <scope>NUCLEOTIDE SEQUENCE [MRNA]</scope>
    <source>
        <tissue>Erythroleukemia</tissue>
    </source>
</reference>
<reference key="2">
    <citation type="journal article" date="2004" name="Genome Res.">
        <title>The status, quality, and expansion of the NIH full-length cDNA project: the Mammalian Gene Collection (MGC).</title>
        <authorList>
            <consortium name="The MGC Project Team"/>
        </authorList>
    </citation>
    <scope>NUCLEOTIDE SEQUENCE [LARGE SCALE MRNA]</scope>
    <source>
        <strain>FVB/N</strain>
        <tissue>Colon</tissue>
        <tissue>Eye</tissue>
        <tissue>Salivary gland</tissue>
    </source>
</reference>
<reference key="3">
    <citation type="journal article" date="2006" name="Mol. Cell. Proteomics">
        <title>Comprehensive identification of phosphorylation sites in postsynaptic density preparations.</title>
        <authorList>
            <person name="Trinidad J.C."/>
            <person name="Specht C.G."/>
            <person name="Thalhammer A."/>
            <person name="Schoepfer R."/>
            <person name="Burlingame A.L."/>
        </authorList>
    </citation>
    <scope>IDENTIFICATION BY MASS SPECTROMETRY [LARGE SCALE ANALYSIS]</scope>
    <source>
        <tissue>Brain</tissue>
    </source>
</reference>
<reference key="4">
    <citation type="journal article" date="2010" name="Cell">
        <title>A tissue-specific atlas of mouse protein phosphorylation and expression.</title>
        <authorList>
            <person name="Huttlin E.L."/>
            <person name="Jedrychowski M.P."/>
            <person name="Elias J.E."/>
            <person name="Goswami T."/>
            <person name="Rad R."/>
            <person name="Beausoleil S.A."/>
            <person name="Villen J."/>
            <person name="Haas W."/>
            <person name="Sowa M.E."/>
            <person name="Gygi S.P."/>
        </authorList>
    </citation>
    <scope>PHOSPHORYLATION [LARGE SCALE ANALYSIS] AT SER-460</scope>
    <scope>IDENTIFICATION BY MASS SPECTROMETRY [LARGE SCALE ANALYSIS]</scope>
    <source>
        <tissue>Testis</tissue>
    </source>
</reference>
<reference key="5">
    <citation type="journal article" date="2013" name="Mol. Cell">
        <title>SIRT5-mediated lysine desuccinylation impacts diverse metabolic pathways.</title>
        <authorList>
            <person name="Park J."/>
            <person name="Chen Y."/>
            <person name="Tishkoff D.X."/>
            <person name="Peng C."/>
            <person name="Tan M."/>
            <person name="Dai L."/>
            <person name="Xie Z."/>
            <person name="Zhang Y."/>
            <person name="Zwaans B.M."/>
            <person name="Skinner M.E."/>
            <person name="Lombard D.B."/>
            <person name="Zhao Y."/>
        </authorList>
    </citation>
    <scope>ACETYLATION [LARGE SCALE ANALYSIS] AT LYS-137</scope>
    <scope>IDENTIFICATION BY MASS SPECTROMETRY [LARGE SCALE ANALYSIS]</scope>
    <source>
        <tissue>Embryonic fibroblast</tissue>
    </source>
</reference>
<name>RED_MOUSE</name>
<keyword id="KW-0007">Acetylation</keyword>
<keyword id="KW-0158">Chromosome</keyword>
<keyword id="KW-0963">Cytoplasm</keyword>
<keyword id="KW-0206">Cytoskeleton</keyword>
<keyword id="KW-1017">Isopeptide bond</keyword>
<keyword id="KW-0507">mRNA processing</keyword>
<keyword id="KW-0508">mRNA splicing</keyword>
<keyword id="KW-0539">Nucleus</keyword>
<keyword id="KW-0597">Phosphoprotein</keyword>
<keyword id="KW-1185">Reference proteome</keyword>
<keyword id="KW-0677">Repeat</keyword>
<keyword id="KW-0747">Spliceosome</keyword>
<keyword id="KW-0832">Ubl conjugation</keyword>
<protein>
    <recommendedName>
        <fullName>Protein Red</fullName>
    </recommendedName>
    <alternativeName>
        <fullName>Cytokine IK</fullName>
    </alternativeName>
    <alternativeName>
        <fullName>IK factor</fullName>
    </alternativeName>
    <alternativeName>
        <fullName>Protein RER</fullName>
    </alternativeName>
</protein>
<sequence length="557" mass="65616">MPERDSEPFSNPLAPDGHDVDDPHSFHQSKLTNEDFRKLLMTPRAAPTSAPPSKSRHHEMPREYNEDEDPAARRRKKKSYYAKLRQQEIERERELAEKYRDRAKERRDGVNKDYEETELISTTANYRAVGPTAEADKSAAEKRRQLIQESKFLGGDMEHTHLVKGLDFALLQKVRAEIASKEKEEEELMEKPQKETKKDEDPENKIEFKTRLGRNVYRMLFKSKSYERNELFLPGRMAYVVDLDDEYADTDIPTTLIRSKADCPTMEAQTTLTTNDIVISKLTQILSYLRQGTRNKKLKKKDKGKLEEKKPPEADMNIFEDIGDYVPSTTKTPRDKERERYRERERDRERDRDRERDRERDRERERERDREREREEEKKRHSYFEKPKVDDEPMDVDKGPGSAKELIKSINEKFAGSAGWEGTESLKKPEDKKQLGDFFGMSNSYAECYPATMDDMAVDSDEEVDYSKMDQGNKKGPLGRWDFDTQEEYSEYMNNKEALPKAAFQYGIKMSEGRKTRRFKETNDKAELDRQWKKISAIIEKRKRMEADGVEVKRPKY</sequence>
<comment type="function">
    <text evidence="1">Involved in pre-mRNA splicing as a component of the spliceosome. Auxiliary spliceosomal protein that regulates selection of alternative splice sites in a small set of target pre-mRNA species. Required for normal mitotic cell cycle progression. Recruits MAD1L1 and MAD2L1 to kinetochores, and is required to trigger the spindle assembly checkpoint. Required for normal accumulation of SMU1.</text>
</comment>
<comment type="subunit">
    <text evidence="1">Component of the spliceosome B complex. Interacts with SMU1. Interacts with MAD1L1. May interact with DHX15.</text>
</comment>
<comment type="subcellular location">
    <subcellularLocation>
        <location evidence="1">Nucleus</location>
    </subcellularLocation>
    <subcellularLocation>
        <location evidence="1">Nucleus</location>
        <location evidence="1">Nucleoplasm</location>
    </subcellularLocation>
    <subcellularLocation>
        <location evidence="1">Chromosome</location>
    </subcellularLocation>
    <subcellularLocation>
        <location evidence="1">Cytoplasm</location>
        <location evidence="1">Cytoskeleton</location>
        <location evidence="1">Spindle pole</location>
    </subcellularLocation>
    <text evidence="1">Predominantly present throughout the nucleoplasm during prometaphase, metaphase and anaphase. Is also detected in nuclear foci that are not identical with Cajal bodies. Starts to accumulate at chromosomes during telophase, and is nearly exclusively associated with chromosomes in newly divided cells. Colocalizes with MAD1L1 at mitotic spindle poles during metaphase and anaphase.</text>
</comment>
<comment type="tissue specificity">
    <text>Ubiquitous.</text>
</comment>
<comment type="similarity">
    <text evidence="3">Belongs to the RED family.</text>
</comment>
<proteinExistence type="evidence at protein level"/>
<gene>
    <name type="primary">Ik</name>
    <name type="synonym">Red</name>
    <name type="synonym">Rer</name>
</gene>
<evidence type="ECO:0000250" key="1">
    <source>
        <dbReference type="UniProtKB" id="Q13123"/>
    </source>
</evidence>
<evidence type="ECO:0000256" key="2">
    <source>
        <dbReference type="SAM" id="MobiDB-lite"/>
    </source>
</evidence>
<evidence type="ECO:0000305" key="3"/>
<evidence type="ECO:0007744" key="4">
    <source>
    </source>
</evidence>
<evidence type="ECO:0007744" key="5">
    <source>
    </source>
</evidence>
<feature type="chain" id="PRO_0000097236" description="Protein Red">
    <location>
        <begin position="1"/>
        <end position="557"/>
    </location>
</feature>
<feature type="repeat" description="1">
    <location>
        <begin position="342"/>
        <end position="343"/>
    </location>
</feature>
<feature type="repeat" description="2">
    <location>
        <begin position="344"/>
        <end position="345"/>
    </location>
</feature>
<feature type="repeat" description="3">
    <location>
        <begin position="346"/>
        <end position="347"/>
    </location>
</feature>
<feature type="repeat" description="4">
    <location>
        <begin position="348"/>
        <end position="349"/>
    </location>
</feature>
<feature type="repeat" description="5">
    <location>
        <begin position="350"/>
        <end position="351"/>
    </location>
</feature>
<feature type="repeat" description="6">
    <location>
        <begin position="352"/>
        <end position="353"/>
    </location>
</feature>
<feature type="repeat" description="7">
    <location>
        <begin position="354"/>
        <end position="355"/>
    </location>
</feature>
<feature type="repeat" description="8">
    <location>
        <begin position="356"/>
        <end position="357"/>
    </location>
</feature>
<feature type="repeat" description="9">
    <location>
        <begin position="358"/>
        <end position="359"/>
    </location>
</feature>
<feature type="repeat" description="10">
    <location>
        <begin position="360"/>
        <end position="361"/>
    </location>
</feature>
<feature type="repeat" description="11">
    <location>
        <begin position="362"/>
        <end position="363"/>
    </location>
</feature>
<feature type="repeat" description="12">
    <location>
        <begin position="364"/>
        <end position="365"/>
    </location>
</feature>
<feature type="repeat" description="13">
    <location>
        <begin position="366"/>
        <end position="367"/>
    </location>
</feature>
<feature type="repeat" description="14">
    <location>
        <begin position="368"/>
        <end position="369"/>
    </location>
</feature>
<feature type="repeat" description="15">
    <location>
        <begin position="370"/>
        <end position="371"/>
    </location>
</feature>
<feature type="repeat" description="16">
    <location>
        <begin position="372"/>
        <end position="373"/>
    </location>
</feature>
<feature type="repeat" description="17">
    <location>
        <begin position="374"/>
        <end position="375"/>
    </location>
</feature>
<feature type="region of interest" description="Disordered" evidence="2">
    <location>
        <begin position="1"/>
        <end position="90"/>
    </location>
</feature>
<feature type="region of interest" description="Disordered" evidence="2">
    <location>
        <begin position="181"/>
        <end position="205"/>
    </location>
</feature>
<feature type="region of interest" description="Disordered" evidence="2">
    <location>
        <begin position="294"/>
        <end position="402"/>
    </location>
</feature>
<feature type="region of interest" description="17 X 2 AA tandem repeats of R-[ED]">
    <location>
        <begin position="342"/>
        <end position="375"/>
    </location>
</feature>
<feature type="compositionally biased region" description="Basic and acidic residues" evidence="2">
    <location>
        <begin position="16"/>
        <end position="25"/>
    </location>
</feature>
<feature type="compositionally biased region" description="Low complexity" evidence="2">
    <location>
        <begin position="42"/>
        <end position="53"/>
    </location>
</feature>
<feature type="compositionally biased region" description="Basic residues" evidence="2">
    <location>
        <begin position="294"/>
        <end position="303"/>
    </location>
</feature>
<feature type="compositionally biased region" description="Basic and acidic residues" evidence="2">
    <location>
        <begin position="304"/>
        <end position="313"/>
    </location>
</feature>
<feature type="compositionally biased region" description="Basic and acidic residues" evidence="2">
    <location>
        <begin position="332"/>
        <end position="398"/>
    </location>
</feature>
<feature type="modified residue" description="N6-acetyllysine" evidence="1">
    <location>
        <position position="98"/>
    </location>
</feature>
<feature type="modified residue" description="N6-acetyllysine" evidence="5">
    <location>
        <position position="137"/>
    </location>
</feature>
<feature type="modified residue" description="Phosphoserine" evidence="1">
    <location>
        <position position="287"/>
    </location>
</feature>
<feature type="modified residue" description="Phosphoserine" evidence="1">
    <location>
        <position position="417"/>
    </location>
</feature>
<feature type="modified residue" description="Phosphoserine" evidence="4">
    <location>
        <position position="460"/>
    </location>
</feature>
<feature type="modified residue" description="Phosphothreonine" evidence="1">
    <location>
        <position position="485"/>
    </location>
</feature>
<feature type="modified residue" description="Phosphoserine" evidence="1">
    <location>
        <position position="536"/>
    </location>
</feature>
<feature type="cross-link" description="Glycyl lysine isopeptide (Lys-Gly) (interchain with G-Cter in SUMO2)" evidence="1">
    <location>
        <position position="151"/>
    </location>
</feature>
<feature type="cross-link" description="Glycyl lysine isopeptide (Lys-Gly) (interchain with G-Cter in SUMO2)" evidence="1">
    <location>
        <position position="310"/>
    </location>
</feature>
<feature type="cross-link" description="Glycyl lysine isopeptide (Lys-Gly) (interchain with G-Cter in SUMO2)" evidence="1">
    <location>
        <position position="331"/>
    </location>
</feature>
<feature type="cross-link" description="Glycyl lysine isopeptide (Lys-Gly) (interchain with G-Cter in SUMO2)" evidence="1">
    <location>
        <position position="386"/>
    </location>
</feature>
<feature type="cross-link" description="Glycyl lysine isopeptide (Lys-Gly) (interchain with G-Cter in SUMO2)" evidence="1">
    <location>
        <position position="388"/>
    </location>
</feature>
<feature type="cross-link" description="Glycyl lysine isopeptide (Lys-Gly) (interchain with G-Cter in SUMO2)" evidence="1">
    <location>
        <position position="404"/>
    </location>
</feature>
<feature type="cross-link" description="Glycyl lysine isopeptide (Lys-Gly) (interchain with G-Cter in SUMO2)" evidence="1">
    <location>
        <position position="408"/>
    </location>
</feature>
<feature type="cross-link" description="Glycyl lysine isopeptide (Lys-Gly) (interchain with G-Cter in SUMO2)" evidence="1">
    <location>
        <position position="496"/>
    </location>
</feature>
<feature type="cross-link" description="Glycyl lysine isopeptide (Lys-Gly) (interchain with G-Cter in SUMO2)" evidence="1">
    <location>
        <position position="501"/>
    </location>
</feature>
<feature type="cross-link" description="Glycyl lysine isopeptide (Lys-Gly) (interchain with G-Cter in SUMO2)" evidence="1">
    <location>
        <position position="509"/>
    </location>
</feature>
<feature type="cross-link" description="Glycyl lysine isopeptide (Lys-Gly) (interchain with G-Cter in SUMO2)" evidence="1">
    <location>
        <position position="541"/>
    </location>
</feature>
<feature type="cross-link" description="Glycyl lysine isopeptide (Lys-Gly) (interchain with G-Cter in SUMO2)" evidence="1">
    <location>
        <position position="543"/>
    </location>
</feature>
<feature type="cross-link" description="Glycyl lysine isopeptide (Lys-Gly) (interchain with G-Cter in SUMO2)" evidence="1">
    <location>
        <position position="553"/>
    </location>
</feature>
<feature type="sequence conflict" description="In Ref. 1; CAA06880." evidence="3" ref="1">
    <original>R</original>
    <variation>G</variation>
    <location>
        <position position="91"/>
    </location>
</feature>